<organism>
    <name type="scientific">Chlamydia pneumoniae</name>
    <name type="common">Chlamydophila pneumoniae</name>
    <dbReference type="NCBI Taxonomy" id="83558"/>
    <lineage>
        <taxon>Bacteria</taxon>
        <taxon>Pseudomonadati</taxon>
        <taxon>Chlamydiota</taxon>
        <taxon>Chlamydiia</taxon>
        <taxon>Chlamydiales</taxon>
        <taxon>Chlamydiaceae</taxon>
        <taxon>Chlamydia/Chlamydophila group</taxon>
        <taxon>Chlamydia</taxon>
    </lineage>
</organism>
<accession>Q9Z9C8</accession>
<accession>Q9JQC8</accession>
<gene>
    <name evidence="1" type="primary">radA</name>
    <name type="synonym">sms</name>
    <name type="ordered locus">CPn_0053</name>
    <name type="ordered locus">CP_0722</name>
    <name type="ordered locus">CpB0054</name>
</gene>
<protein>
    <recommendedName>
        <fullName evidence="1">DNA repair protein RadA</fullName>
        <ecNumber evidence="1">3.6.4.-</ecNumber>
    </recommendedName>
    <alternativeName>
        <fullName evidence="1">Branch migration protein RadA</fullName>
    </alternativeName>
</protein>
<evidence type="ECO:0000255" key="1">
    <source>
        <dbReference type="HAMAP-Rule" id="MF_01498"/>
    </source>
</evidence>
<reference key="1">
    <citation type="journal article" date="1999" name="Nat. Genet.">
        <title>Comparative genomes of Chlamydia pneumoniae and C. trachomatis.</title>
        <authorList>
            <person name="Kalman S."/>
            <person name="Mitchell W.P."/>
            <person name="Marathe R."/>
            <person name="Lammel C.J."/>
            <person name="Fan J."/>
            <person name="Hyman R.W."/>
            <person name="Olinger L."/>
            <person name="Grimwood J."/>
            <person name="Davis R.W."/>
            <person name="Stephens R.S."/>
        </authorList>
    </citation>
    <scope>NUCLEOTIDE SEQUENCE [LARGE SCALE GENOMIC DNA]</scope>
    <source>
        <strain>CWL029</strain>
    </source>
</reference>
<reference key="2">
    <citation type="journal article" date="2000" name="Nucleic Acids Res.">
        <title>Genome sequences of Chlamydia trachomatis MoPn and Chlamydia pneumoniae AR39.</title>
        <authorList>
            <person name="Read T.D."/>
            <person name="Brunham R.C."/>
            <person name="Shen C."/>
            <person name="Gill S.R."/>
            <person name="Heidelberg J.F."/>
            <person name="White O."/>
            <person name="Hickey E.K."/>
            <person name="Peterson J.D."/>
            <person name="Utterback T.R."/>
            <person name="Berry K.J."/>
            <person name="Bass S."/>
            <person name="Linher K.D."/>
            <person name="Weidman J.F."/>
            <person name="Khouri H.M."/>
            <person name="Craven B."/>
            <person name="Bowman C."/>
            <person name="Dodson R.J."/>
            <person name="Gwinn M.L."/>
            <person name="Nelson W.C."/>
            <person name="DeBoy R.T."/>
            <person name="Kolonay J.F."/>
            <person name="McClarty G."/>
            <person name="Salzberg S.L."/>
            <person name="Eisen J.A."/>
            <person name="Fraser C.M."/>
        </authorList>
    </citation>
    <scope>NUCLEOTIDE SEQUENCE [LARGE SCALE GENOMIC DNA]</scope>
    <source>
        <strain>AR39</strain>
    </source>
</reference>
<reference key="3">
    <citation type="journal article" date="2000" name="Nucleic Acids Res.">
        <title>Comparison of whole genome sequences of Chlamydia pneumoniae J138 from Japan and CWL029 from USA.</title>
        <authorList>
            <person name="Shirai M."/>
            <person name="Hirakawa H."/>
            <person name="Kimoto M."/>
            <person name="Tabuchi M."/>
            <person name="Kishi F."/>
            <person name="Ouchi K."/>
            <person name="Shiba T."/>
            <person name="Ishii K."/>
            <person name="Hattori M."/>
            <person name="Kuhara S."/>
            <person name="Nakazawa T."/>
        </authorList>
    </citation>
    <scope>NUCLEOTIDE SEQUENCE [LARGE SCALE GENOMIC DNA]</scope>
    <source>
        <strain>J138</strain>
    </source>
</reference>
<reference key="4">
    <citation type="submission" date="2002-05" db="EMBL/GenBank/DDBJ databases">
        <title>The genome sequence of Chlamydia pneumoniae TW183 and comparison with other Chlamydia strains based on whole genome sequence analysis.</title>
        <authorList>
            <person name="Geng M.M."/>
            <person name="Schuhmacher A."/>
            <person name="Muehldorfer I."/>
            <person name="Bensch K.W."/>
            <person name="Schaefer K.P."/>
            <person name="Schneider S."/>
            <person name="Pohl T."/>
            <person name="Essig A."/>
            <person name="Marre R."/>
            <person name="Melchers K."/>
        </authorList>
    </citation>
    <scope>NUCLEOTIDE SEQUENCE [LARGE SCALE GENOMIC DNA]</scope>
    <source>
        <strain>TW-183</strain>
    </source>
</reference>
<name>RADA_CHLPN</name>
<sequence length="453" mass="49235">MATKTKTQWTCNQCGATAPKWLGQCPGCHNWNSLVEEYVPQARSGTSSRSSTSAIALSSIELENESRIFIDHAGWDRILGGGVVRGSLTLLGGDPGIGKSTLLLQTAERLASQKYKVLYVCGEESVTQTSLRAKRLNISSPLIYLFPETNLDNIKQQIATLEPDILIIDSIQIIFNPTLNSAPGSVAQVREVTYELMQIAKSAQITTFIIGHVTKSGEIAGPRVLEHLVDTVLYFEGNSHANYRMIRSVKNRFGPTNELLILSMHADGLKEVSNPSGLFLQEKTGPTTGSMIIPIIEGSGALLIELQALVSSSPFANPVRKTAGFDPNRFSLLLAVLEKRAQVKLFTMDVFLSITGGLKIIEPAADLGALLAVASSLYNRLLPNNSIVIGEVGLGGEIRHVAHLERRIKEGKLMGFEGAILPEGQISSLPKEIRENFRLQGVKTIKDAIRLLL</sequence>
<proteinExistence type="inferred from homology"/>
<keyword id="KW-0067">ATP-binding</keyword>
<keyword id="KW-0227">DNA damage</keyword>
<keyword id="KW-0234">DNA repair</keyword>
<keyword id="KW-0238">DNA-binding</keyword>
<keyword id="KW-0378">Hydrolase</keyword>
<keyword id="KW-0479">Metal-binding</keyword>
<keyword id="KW-0547">Nucleotide-binding</keyword>
<keyword id="KW-0346">Stress response</keyword>
<keyword id="KW-0862">Zinc</keyword>
<keyword id="KW-0863">Zinc-finger</keyword>
<dbReference type="EC" id="3.6.4.-" evidence="1"/>
<dbReference type="EMBL" id="AE001363">
    <property type="protein sequence ID" value="AAD18206.1"/>
    <property type="molecule type" value="Genomic_DNA"/>
</dbReference>
<dbReference type="EMBL" id="AE002161">
    <property type="protein sequence ID" value="AAF38527.1"/>
    <property type="molecule type" value="Genomic_DNA"/>
</dbReference>
<dbReference type="EMBL" id="BA000008">
    <property type="protein sequence ID" value="BAA98264.1"/>
    <property type="molecule type" value="Genomic_DNA"/>
</dbReference>
<dbReference type="EMBL" id="AE009440">
    <property type="protein sequence ID" value="AAP97987.1"/>
    <property type="molecule type" value="Genomic_DNA"/>
</dbReference>
<dbReference type="PIR" id="C72126">
    <property type="entry name" value="C72126"/>
</dbReference>
<dbReference type="PIR" id="F86497">
    <property type="entry name" value="F86497"/>
</dbReference>
<dbReference type="RefSeq" id="NP_224261.1">
    <property type="nucleotide sequence ID" value="NC_000922.1"/>
</dbReference>
<dbReference type="RefSeq" id="WP_010882703.1">
    <property type="nucleotide sequence ID" value="NZ_LN847257.1"/>
</dbReference>
<dbReference type="SMR" id="Q9Z9C8"/>
<dbReference type="STRING" id="406984.CPK_ORF00556"/>
<dbReference type="MEROPS" id="S16.A04"/>
<dbReference type="GeneID" id="45050097"/>
<dbReference type="KEGG" id="cpa:CP_0722"/>
<dbReference type="KEGG" id="cpj:sms"/>
<dbReference type="KEGG" id="cpn:CPn_0053"/>
<dbReference type="KEGG" id="cpt:CpB0054"/>
<dbReference type="PATRIC" id="fig|115713.3.peg.61"/>
<dbReference type="eggNOG" id="COG1066">
    <property type="taxonomic scope" value="Bacteria"/>
</dbReference>
<dbReference type="HOGENOM" id="CLU_018264_0_1_0"/>
<dbReference type="OMA" id="CPECQAW"/>
<dbReference type="OrthoDB" id="9803906at2"/>
<dbReference type="Proteomes" id="UP000000583">
    <property type="component" value="Chromosome"/>
</dbReference>
<dbReference type="Proteomes" id="UP000000801">
    <property type="component" value="Chromosome"/>
</dbReference>
<dbReference type="GO" id="GO:0005829">
    <property type="term" value="C:cytosol"/>
    <property type="evidence" value="ECO:0007669"/>
    <property type="project" value="TreeGrafter"/>
</dbReference>
<dbReference type="GO" id="GO:0005524">
    <property type="term" value="F:ATP binding"/>
    <property type="evidence" value="ECO:0007669"/>
    <property type="project" value="UniProtKB-UniRule"/>
</dbReference>
<dbReference type="GO" id="GO:0016887">
    <property type="term" value="F:ATP hydrolysis activity"/>
    <property type="evidence" value="ECO:0007669"/>
    <property type="project" value="InterPro"/>
</dbReference>
<dbReference type="GO" id="GO:0140664">
    <property type="term" value="F:ATP-dependent DNA damage sensor activity"/>
    <property type="evidence" value="ECO:0007669"/>
    <property type="project" value="InterPro"/>
</dbReference>
<dbReference type="GO" id="GO:0003684">
    <property type="term" value="F:damaged DNA binding"/>
    <property type="evidence" value="ECO:0007669"/>
    <property type="project" value="InterPro"/>
</dbReference>
<dbReference type="GO" id="GO:0008270">
    <property type="term" value="F:zinc ion binding"/>
    <property type="evidence" value="ECO:0007669"/>
    <property type="project" value="UniProtKB-KW"/>
</dbReference>
<dbReference type="GO" id="GO:0000725">
    <property type="term" value="P:recombinational repair"/>
    <property type="evidence" value="ECO:0007669"/>
    <property type="project" value="UniProtKB-UniRule"/>
</dbReference>
<dbReference type="CDD" id="cd01121">
    <property type="entry name" value="RadA_SMS_N"/>
    <property type="match status" value="1"/>
</dbReference>
<dbReference type="FunFam" id="3.40.50.300:FF:000050">
    <property type="entry name" value="DNA repair protein RadA"/>
    <property type="match status" value="1"/>
</dbReference>
<dbReference type="Gene3D" id="3.30.230.10">
    <property type="match status" value="1"/>
</dbReference>
<dbReference type="Gene3D" id="3.40.50.300">
    <property type="entry name" value="P-loop containing nucleotide triphosphate hydrolases"/>
    <property type="match status" value="1"/>
</dbReference>
<dbReference type="HAMAP" id="MF_01498">
    <property type="entry name" value="RadA_bact"/>
    <property type="match status" value="1"/>
</dbReference>
<dbReference type="InterPro" id="IPR003593">
    <property type="entry name" value="AAA+_ATPase"/>
</dbReference>
<dbReference type="InterPro" id="IPR004504">
    <property type="entry name" value="DNA_repair_RadA"/>
</dbReference>
<dbReference type="InterPro" id="IPR027417">
    <property type="entry name" value="P-loop_NTPase"/>
</dbReference>
<dbReference type="InterPro" id="IPR020588">
    <property type="entry name" value="RecA_ATP-bd"/>
</dbReference>
<dbReference type="InterPro" id="IPR020568">
    <property type="entry name" value="Ribosomal_Su5_D2-typ_SF"/>
</dbReference>
<dbReference type="InterPro" id="IPR014721">
    <property type="entry name" value="Ribsml_uS5_D2-typ_fold_subgr"/>
</dbReference>
<dbReference type="InterPro" id="IPR041166">
    <property type="entry name" value="Rubredoxin_2"/>
</dbReference>
<dbReference type="NCBIfam" id="TIGR00416">
    <property type="entry name" value="sms"/>
    <property type="match status" value="1"/>
</dbReference>
<dbReference type="PANTHER" id="PTHR32472">
    <property type="entry name" value="DNA REPAIR PROTEIN RADA"/>
    <property type="match status" value="1"/>
</dbReference>
<dbReference type="PANTHER" id="PTHR32472:SF10">
    <property type="entry name" value="DNA REPAIR PROTEIN RADA-LIKE PROTEIN"/>
    <property type="match status" value="1"/>
</dbReference>
<dbReference type="Pfam" id="PF13481">
    <property type="entry name" value="AAA_25"/>
    <property type="match status" value="1"/>
</dbReference>
<dbReference type="Pfam" id="PF18073">
    <property type="entry name" value="Zn_ribbon_LapB"/>
    <property type="match status" value="1"/>
</dbReference>
<dbReference type="PRINTS" id="PR01874">
    <property type="entry name" value="DNAREPAIRADA"/>
</dbReference>
<dbReference type="SMART" id="SM00382">
    <property type="entry name" value="AAA"/>
    <property type="match status" value="1"/>
</dbReference>
<dbReference type="SUPFAM" id="SSF52540">
    <property type="entry name" value="P-loop containing nucleoside triphosphate hydrolases"/>
    <property type="match status" value="1"/>
</dbReference>
<dbReference type="SUPFAM" id="SSF54211">
    <property type="entry name" value="Ribosomal protein S5 domain 2-like"/>
    <property type="match status" value="1"/>
</dbReference>
<dbReference type="PROSITE" id="PS50162">
    <property type="entry name" value="RECA_2"/>
    <property type="match status" value="1"/>
</dbReference>
<feature type="chain" id="PRO_0000187924" description="DNA repair protein RadA">
    <location>
        <begin position="1"/>
        <end position="453"/>
    </location>
</feature>
<feature type="zinc finger region" description="C4-type" evidence="1">
    <location>
        <begin position="11"/>
        <end position="28"/>
    </location>
</feature>
<feature type="region of interest" description="Lon-protease-like" evidence="1">
    <location>
        <begin position="349"/>
        <end position="453"/>
    </location>
</feature>
<feature type="short sequence motif" description="RadA KNRFG motif" evidence="1">
    <location>
        <begin position="250"/>
        <end position="254"/>
    </location>
</feature>
<feature type="binding site" evidence="1">
    <location>
        <begin position="93"/>
        <end position="100"/>
    </location>
    <ligand>
        <name>ATP</name>
        <dbReference type="ChEBI" id="CHEBI:30616"/>
    </ligand>
</feature>
<comment type="function">
    <text evidence="1">DNA-dependent ATPase involved in processing of recombination intermediates, plays a role in repairing DNA breaks. Stimulates the branch migration of RecA-mediated strand transfer reactions, allowing the 3' invading strand to extend heteroduplex DNA faster. Binds ssDNA in the presence of ADP but not other nucleotides, has ATPase activity that is stimulated by ssDNA and various branched DNA structures, but inhibited by SSB. Does not have RecA's homology-searching function.</text>
</comment>
<comment type="domain">
    <text evidence="1">Has a putative N-terminal zinc-finger, a middle region with homology to RecA with ATPase motifs including the RadA KNRFG motif, while the C-terminus is homologous to Lon protease.</text>
</comment>
<comment type="similarity">
    <text evidence="1">Belongs to the RecA family. RadA subfamily.</text>
</comment>